<proteinExistence type="inferred from homology"/>
<reference key="1">
    <citation type="journal article" date="2003" name="Proc. Natl. Acad. Sci. U.S.A.">
        <title>The complete genome sequence of Chromobacterium violaceum reveals remarkable and exploitable bacterial adaptability.</title>
        <authorList>
            <person name="Vasconcelos A.T.R."/>
            <person name="de Almeida D.F."/>
            <person name="Hungria M."/>
            <person name="Guimaraes C.T."/>
            <person name="Antonio R.V."/>
            <person name="Almeida F.C."/>
            <person name="de Almeida L.G.P."/>
            <person name="de Almeida R."/>
            <person name="Alves-Gomes J.A."/>
            <person name="Andrade E.M."/>
            <person name="Araripe J."/>
            <person name="de Araujo M.F.F."/>
            <person name="Astolfi-Filho S."/>
            <person name="Azevedo V."/>
            <person name="Baptista A.J."/>
            <person name="Bataus L.A.M."/>
            <person name="Batista J.S."/>
            <person name="Belo A."/>
            <person name="van den Berg C."/>
            <person name="Bogo M."/>
            <person name="Bonatto S."/>
            <person name="Bordignon J."/>
            <person name="Brigido M.M."/>
            <person name="Brito C.A."/>
            <person name="Brocchi M."/>
            <person name="Burity H.A."/>
            <person name="Camargo A.A."/>
            <person name="Cardoso D.D.P."/>
            <person name="Carneiro N.P."/>
            <person name="Carraro D.M."/>
            <person name="Carvalho C.M.B."/>
            <person name="Cascardo J.C.M."/>
            <person name="Cavada B.S."/>
            <person name="Chueire L.M.O."/>
            <person name="Creczynski-Pasa T.B."/>
            <person name="Cunha-Junior N.C."/>
            <person name="Fagundes N."/>
            <person name="Falcao C.L."/>
            <person name="Fantinatti F."/>
            <person name="Farias I.P."/>
            <person name="Felipe M.S.S."/>
            <person name="Ferrari L.P."/>
            <person name="Ferro J.A."/>
            <person name="Ferro M.I.T."/>
            <person name="Franco G.R."/>
            <person name="Freitas N.S.A."/>
            <person name="Furlan L.R."/>
            <person name="Gazzinelli R.T."/>
            <person name="Gomes E.A."/>
            <person name="Goncalves P.R."/>
            <person name="Grangeiro T.B."/>
            <person name="Grattapaglia D."/>
            <person name="Grisard E.C."/>
            <person name="Hanna E.S."/>
            <person name="Jardim S.N."/>
            <person name="Laurino J."/>
            <person name="Leoi L.C.T."/>
            <person name="Lima L.F.A."/>
            <person name="Loureiro M.F."/>
            <person name="Lyra M.C.C.P."/>
            <person name="Madeira H.M.F."/>
            <person name="Manfio G.P."/>
            <person name="Maranhao A.Q."/>
            <person name="Martins W.S."/>
            <person name="di Mauro S.M.Z."/>
            <person name="de Medeiros S.R.B."/>
            <person name="Meissner R.V."/>
            <person name="Moreira M.A.M."/>
            <person name="Nascimento F.F."/>
            <person name="Nicolas M.F."/>
            <person name="Oliveira J.G."/>
            <person name="Oliveira S.C."/>
            <person name="Paixao R.F.C."/>
            <person name="Parente J.A."/>
            <person name="Pedrosa F.O."/>
            <person name="Pena S.D.J."/>
            <person name="Pereira J.O."/>
            <person name="Pereira M."/>
            <person name="Pinto L.S.R.C."/>
            <person name="Pinto L.S."/>
            <person name="Porto J.I.R."/>
            <person name="Potrich D.P."/>
            <person name="Ramalho-Neto C.E."/>
            <person name="Reis A.M.M."/>
            <person name="Rigo L.U."/>
            <person name="Rondinelli E."/>
            <person name="Santos E.B.P."/>
            <person name="Santos F.R."/>
            <person name="Schneider M.P.C."/>
            <person name="Seuanez H.N."/>
            <person name="Silva A.M.R."/>
            <person name="da Silva A.L.C."/>
            <person name="Silva D.W."/>
            <person name="Silva R."/>
            <person name="Simoes I.C."/>
            <person name="Simon D."/>
            <person name="Soares C.M.A."/>
            <person name="Soares R.B.A."/>
            <person name="Souza E.M."/>
            <person name="Souza K.R.L."/>
            <person name="Souza R.C."/>
            <person name="Steffens M.B.R."/>
            <person name="Steindel M."/>
            <person name="Teixeira S.R."/>
            <person name="Urmenyi T."/>
            <person name="Vettore A."/>
            <person name="Wassem R."/>
            <person name="Zaha A."/>
            <person name="Simpson A.J.G."/>
        </authorList>
    </citation>
    <scope>NUCLEOTIDE SEQUENCE [LARGE SCALE GENOMIC DNA]</scope>
    <source>
        <strain>ATCC 12472 / DSM 30191 / JCM 1249 / CCUG 213 / NBRC 12614 / NCIMB 9131 / NCTC 9757 / MK</strain>
    </source>
</reference>
<organism>
    <name type="scientific">Chromobacterium violaceum (strain ATCC 12472 / DSM 30191 / JCM 1249 / CCUG 213 / NBRC 12614 / NCIMB 9131 / NCTC 9757 / MK)</name>
    <dbReference type="NCBI Taxonomy" id="243365"/>
    <lineage>
        <taxon>Bacteria</taxon>
        <taxon>Pseudomonadati</taxon>
        <taxon>Pseudomonadota</taxon>
        <taxon>Betaproteobacteria</taxon>
        <taxon>Neisseriales</taxon>
        <taxon>Chromobacteriaceae</taxon>
        <taxon>Chromobacterium</taxon>
    </lineage>
</organism>
<evidence type="ECO:0000255" key="1">
    <source>
        <dbReference type="HAMAP-Rule" id="MF_00766"/>
    </source>
</evidence>
<sequence length="228" mass="26071">MSRILFKILAALVAAFLLYNLWVLGHIIYWRDHNPGASSFMNEQLARLQQDDPEAELRHKWVPYDKISPNLKRALIASEDARFVDHEGFDWDGIEAAFEKNLKKGKIVAGGSTISQQLAKNLFLSSGKTPWRKLEEALITVMLETVLDKRRIYEIYLNVIEWGNGVFGAEAASRYYFRTGASRLSSSQAAKLAAMVPNPRYYDEHRNAPGLARKTRIIQRRMAYVELP</sequence>
<feature type="chain" id="PRO_0000083124" description="Biosynthetic peptidoglycan transglycosylase">
    <location>
        <begin position="1"/>
        <end position="228"/>
    </location>
</feature>
<feature type="transmembrane region" description="Helical" evidence="1">
    <location>
        <begin position="8"/>
        <end position="28"/>
    </location>
</feature>
<comment type="function">
    <text evidence="1">Peptidoglycan polymerase that catalyzes glycan chain elongation from lipid-linked precursors.</text>
</comment>
<comment type="catalytic activity">
    <reaction evidence="1">
        <text>[GlcNAc-(1-&gt;4)-Mur2Ac(oyl-L-Ala-gamma-D-Glu-L-Lys-D-Ala-D-Ala)](n)-di-trans,octa-cis-undecaprenyl diphosphate + beta-D-GlcNAc-(1-&gt;4)-Mur2Ac(oyl-L-Ala-gamma-D-Glu-L-Lys-D-Ala-D-Ala)-di-trans,octa-cis-undecaprenyl diphosphate = [GlcNAc-(1-&gt;4)-Mur2Ac(oyl-L-Ala-gamma-D-Glu-L-Lys-D-Ala-D-Ala)](n+1)-di-trans,octa-cis-undecaprenyl diphosphate + di-trans,octa-cis-undecaprenyl diphosphate + H(+)</text>
        <dbReference type="Rhea" id="RHEA:23708"/>
        <dbReference type="Rhea" id="RHEA-COMP:9602"/>
        <dbReference type="Rhea" id="RHEA-COMP:9603"/>
        <dbReference type="ChEBI" id="CHEBI:15378"/>
        <dbReference type="ChEBI" id="CHEBI:58405"/>
        <dbReference type="ChEBI" id="CHEBI:60033"/>
        <dbReference type="ChEBI" id="CHEBI:78435"/>
        <dbReference type="EC" id="2.4.99.28"/>
    </reaction>
</comment>
<comment type="pathway">
    <text evidence="1">Cell wall biogenesis; peptidoglycan biosynthesis.</text>
</comment>
<comment type="subcellular location">
    <subcellularLocation>
        <location evidence="1">Cell inner membrane</location>
        <topology evidence="1">Single-pass membrane protein</topology>
    </subcellularLocation>
</comment>
<comment type="similarity">
    <text evidence="1">Belongs to the glycosyltransferase 51 family.</text>
</comment>
<keyword id="KW-0997">Cell inner membrane</keyword>
<keyword id="KW-1003">Cell membrane</keyword>
<keyword id="KW-0133">Cell shape</keyword>
<keyword id="KW-0961">Cell wall biogenesis/degradation</keyword>
<keyword id="KW-0328">Glycosyltransferase</keyword>
<keyword id="KW-0472">Membrane</keyword>
<keyword id="KW-0573">Peptidoglycan synthesis</keyword>
<keyword id="KW-1185">Reference proteome</keyword>
<keyword id="KW-0808">Transferase</keyword>
<keyword id="KW-0812">Transmembrane</keyword>
<keyword id="KW-1133">Transmembrane helix</keyword>
<name>MTGA_CHRVO</name>
<dbReference type="EC" id="2.4.99.28" evidence="1"/>
<dbReference type="EMBL" id="AE016825">
    <property type="protein sequence ID" value="AAQ61248.1"/>
    <property type="molecule type" value="Genomic_DNA"/>
</dbReference>
<dbReference type="RefSeq" id="WP_011137133.1">
    <property type="nucleotide sequence ID" value="NC_005085.1"/>
</dbReference>
<dbReference type="SMR" id="Q7NS41"/>
<dbReference type="STRING" id="243365.CV_3586"/>
<dbReference type="CAZy" id="GT51">
    <property type="family name" value="Glycosyltransferase Family 51"/>
</dbReference>
<dbReference type="GeneID" id="66364819"/>
<dbReference type="KEGG" id="cvi:CV_3586"/>
<dbReference type="eggNOG" id="COG0744">
    <property type="taxonomic scope" value="Bacteria"/>
</dbReference>
<dbReference type="HOGENOM" id="CLU_006354_1_0_4"/>
<dbReference type="OrthoDB" id="9766909at2"/>
<dbReference type="UniPathway" id="UPA00219"/>
<dbReference type="Proteomes" id="UP000001424">
    <property type="component" value="Chromosome"/>
</dbReference>
<dbReference type="GO" id="GO:0009274">
    <property type="term" value="C:peptidoglycan-based cell wall"/>
    <property type="evidence" value="ECO:0007669"/>
    <property type="project" value="InterPro"/>
</dbReference>
<dbReference type="GO" id="GO:0005886">
    <property type="term" value="C:plasma membrane"/>
    <property type="evidence" value="ECO:0007669"/>
    <property type="project" value="UniProtKB-SubCell"/>
</dbReference>
<dbReference type="GO" id="GO:0016763">
    <property type="term" value="F:pentosyltransferase activity"/>
    <property type="evidence" value="ECO:0007669"/>
    <property type="project" value="InterPro"/>
</dbReference>
<dbReference type="GO" id="GO:0008955">
    <property type="term" value="F:peptidoglycan glycosyltransferase activity"/>
    <property type="evidence" value="ECO:0007669"/>
    <property type="project" value="UniProtKB-UniRule"/>
</dbReference>
<dbReference type="GO" id="GO:0071555">
    <property type="term" value="P:cell wall organization"/>
    <property type="evidence" value="ECO:0007669"/>
    <property type="project" value="UniProtKB-KW"/>
</dbReference>
<dbReference type="GO" id="GO:0009252">
    <property type="term" value="P:peptidoglycan biosynthetic process"/>
    <property type="evidence" value="ECO:0007669"/>
    <property type="project" value="UniProtKB-UniRule"/>
</dbReference>
<dbReference type="GO" id="GO:0008360">
    <property type="term" value="P:regulation of cell shape"/>
    <property type="evidence" value="ECO:0007669"/>
    <property type="project" value="UniProtKB-KW"/>
</dbReference>
<dbReference type="Gene3D" id="1.10.3810.10">
    <property type="entry name" value="Biosynthetic peptidoglycan transglycosylase-like"/>
    <property type="match status" value="1"/>
</dbReference>
<dbReference type="HAMAP" id="MF_00766">
    <property type="entry name" value="PGT_MtgA"/>
    <property type="match status" value="1"/>
</dbReference>
<dbReference type="InterPro" id="IPR001264">
    <property type="entry name" value="Glyco_trans_51"/>
</dbReference>
<dbReference type="InterPro" id="IPR023346">
    <property type="entry name" value="Lysozyme-like_dom_sf"/>
</dbReference>
<dbReference type="InterPro" id="IPR036950">
    <property type="entry name" value="PBP_transglycosylase"/>
</dbReference>
<dbReference type="InterPro" id="IPR011812">
    <property type="entry name" value="Pep_trsgly"/>
</dbReference>
<dbReference type="NCBIfam" id="TIGR02070">
    <property type="entry name" value="mono_pep_trsgly"/>
    <property type="match status" value="1"/>
</dbReference>
<dbReference type="PANTHER" id="PTHR30400:SF0">
    <property type="entry name" value="BIOSYNTHETIC PEPTIDOGLYCAN TRANSGLYCOSYLASE"/>
    <property type="match status" value="1"/>
</dbReference>
<dbReference type="PANTHER" id="PTHR30400">
    <property type="entry name" value="MONOFUNCTIONAL BIOSYNTHETIC PEPTIDOGLYCAN TRANSGLYCOSYLASE"/>
    <property type="match status" value="1"/>
</dbReference>
<dbReference type="Pfam" id="PF00912">
    <property type="entry name" value="Transgly"/>
    <property type="match status" value="1"/>
</dbReference>
<dbReference type="SUPFAM" id="SSF53955">
    <property type="entry name" value="Lysozyme-like"/>
    <property type="match status" value="1"/>
</dbReference>
<gene>
    <name evidence="1" type="primary">mtgA</name>
    <name type="ordered locus">CV_3586</name>
</gene>
<protein>
    <recommendedName>
        <fullName evidence="1">Biosynthetic peptidoglycan transglycosylase</fullName>
        <ecNumber evidence="1">2.4.99.28</ecNumber>
    </recommendedName>
    <alternativeName>
        <fullName evidence="1">Glycan polymerase</fullName>
    </alternativeName>
    <alternativeName>
        <fullName evidence="1">Peptidoglycan glycosyltransferase MtgA</fullName>
        <shortName evidence="1">PGT</shortName>
    </alternativeName>
</protein>
<accession>Q7NS41</accession>